<organism>
    <name type="scientific">Shigella dysenteriae serotype 1 (strain Sd197)</name>
    <dbReference type="NCBI Taxonomy" id="300267"/>
    <lineage>
        <taxon>Bacteria</taxon>
        <taxon>Pseudomonadati</taxon>
        <taxon>Pseudomonadota</taxon>
        <taxon>Gammaproteobacteria</taxon>
        <taxon>Enterobacterales</taxon>
        <taxon>Enterobacteriaceae</taxon>
        <taxon>Shigella</taxon>
    </lineage>
</organism>
<name>GATY_SHIDS</name>
<accession>Q32EA9</accession>
<proteinExistence type="inferred from homology"/>
<reference key="1">
    <citation type="journal article" date="2005" name="Nucleic Acids Res.">
        <title>Genome dynamics and diversity of Shigella species, the etiologic agents of bacillary dysentery.</title>
        <authorList>
            <person name="Yang F."/>
            <person name="Yang J."/>
            <person name="Zhang X."/>
            <person name="Chen L."/>
            <person name="Jiang Y."/>
            <person name="Yan Y."/>
            <person name="Tang X."/>
            <person name="Wang J."/>
            <person name="Xiong Z."/>
            <person name="Dong J."/>
            <person name="Xue Y."/>
            <person name="Zhu Y."/>
            <person name="Xu X."/>
            <person name="Sun L."/>
            <person name="Chen S."/>
            <person name="Nie H."/>
            <person name="Peng J."/>
            <person name="Xu J."/>
            <person name="Wang Y."/>
            <person name="Yuan Z."/>
            <person name="Wen Y."/>
            <person name="Yao Z."/>
            <person name="Shen Y."/>
            <person name="Qiang B."/>
            <person name="Hou Y."/>
            <person name="Yu J."/>
            <person name="Jin Q."/>
        </authorList>
    </citation>
    <scope>NUCLEOTIDE SEQUENCE [LARGE SCALE GENOMIC DNA]</scope>
    <source>
        <strain>Sd197</strain>
    </source>
</reference>
<protein>
    <recommendedName>
        <fullName evidence="1">D-tagatose-1,6-bisphosphate aldolase subunit GatY</fullName>
        <shortName evidence="1">TBPA</shortName>
        <shortName evidence="1">TagBP aldolase</shortName>
        <ecNumber evidence="1">4.1.2.40</ecNumber>
    </recommendedName>
    <alternativeName>
        <fullName evidence="1">D-tagatose-bisphosphate aldolase class II</fullName>
    </alternativeName>
    <alternativeName>
        <fullName evidence="1">Tagatose-bisphosphate aldolase</fullName>
    </alternativeName>
</protein>
<sequence length="284" mass="30884">MYVVSTKQMLNNAQRGGYAVPAFNIHNLETMQVVVETAANLHAPVIIAGTPGTFTHAGIENLLALVSAMAKQYHHLLAIHLDHHTKFDDIAQKVRSGVRSVMIDASHLPFAQNISRVKEVVDFCHRFDVSVEAELGQLGGQEDDVQVNEADALYTNPVQAREFAEATGIDSLAVAIGTAHGMYASAPALDFSRLENIRQWVNLPLVLHGASGLSTKDIQQTIKLGICKINVATELKNSFSQALKNYLTEHPEATDPRDYLQSAKSAMRDVVSKVIADCGCEGRA</sequence>
<feature type="chain" id="PRO_0000355354" description="D-tagatose-1,6-bisphosphate aldolase subunit GatY">
    <location>
        <begin position="1"/>
        <end position="284"/>
    </location>
</feature>
<feature type="active site" description="Proton donor" evidence="1">
    <location>
        <position position="82"/>
    </location>
</feature>
<feature type="binding site" evidence="1">
    <location>
        <position position="83"/>
    </location>
    <ligand>
        <name>Zn(2+)</name>
        <dbReference type="ChEBI" id="CHEBI:29105"/>
        <note>catalytic</note>
    </ligand>
</feature>
<feature type="binding site" evidence="1">
    <location>
        <position position="180"/>
    </location>
    <ligand>
        <name>Zn(2+)</name>
        <dbReference type="ChEBI" id="CHEBI:29105"/>
        <note>catalytic</note>
    </ligand>
</feature>
<feature type="binding site" evidence="1">
    <location>
        <position position="181"/>
    </location>
    <ligand>
        <name>dihydroxyacetone phosphate</name>
        <dbReference type="ChEBI" id="CHEBI:57642"/>
    </ligand>
</feature>
<feature type="binding site" evidence="1">
    <location>
        <position position="208"/>
    </location>
    <ligand>
        <name>Zn(2+)</name>
        <dbReference type="ChEBI" id="CHEBI:29105"/>
        <note>catalytic</note>
    </ligand>
</feature>
<feature type="binding site" evidence="1">
    <location>
        <begin position="209"/>
        <end position="211"/>
    </location>
    <ligand>
        <name>dihydroxyacetone phosphate</name>
        <dbReference type="ChEBI" id="CHEBI:57642"/>
    </ligand>
</feature>
<feature type="binding site" evidence="1">
    <location>
        <begin position="230"/>
        <end position="233"/>
    </location>
    <ligand>
        <name>dihydroxyacetone phosphate</name>
        <dbReference type="ChEBI" id="CHEBI:57642"/>
    </ligand>
</feature>
<keyword id="KW-0298">Galactitol metabolism</keyword>
<keyword id="KW-0456">Lyase</keyword>
<keyword id="KW-0479">Metal-binding</keyword>
<keyword id="KW-1185">Reference proteome</keyword>
<keyword id="KW-0862">Zinc</keyword>
<gene>
    <name evidence="1" type="primary">gatY</name>
    <name type="ordered locus">SDY_2269</name>
</gene>
<evidence type="ECO:0000255" key="1">
    <source>
        <dbReference type="HAMAP-Rule" id="MF_01294"/>
    </source>
</evidence>
<evidence type="ECO:0000305" key="2"/>
<comment type="function">
    <text evidence="1">Catalytic subunit of the tagatose-1,6-bisphosphate aldolase GatYZ, which catalyzes the reversible aldol condensation of dihydroxyacetone phosphate (DHAP or glycerone-phosphate) with glyceraldehyde 3-phosphate (G3P) to produce tagatose 1,6-bisphosphate (TBP). Requires GatZ subunit for full activity and stability. Is involved in the catabolism of galactitol.</text>
</comment>
<comment type="catalytic activity">
    <reaction evidence="1">
        <text>D-tagatofuranose 1,6-bisphosphate = D-glyceraldehyde 3-phosphate + dihydroxyacetone phosphate</text>
        <dbReference type="Rhea" id="RHEA:22948"/>
        <dbReference type="ChEBI" id="CHEBI:57642"/>
        <dbReference type="ChEBI" id="CHEBI:58694"/>
        <dbReference type="ChEBI" id="CHEBI:59776"/>
        <dbReference type="EC" id="4.1.2.40"/>
    </reaction>
</comment>
<comment type="cofactor">
    <cofactor evidence="1">
        <name>Zn(2+)</name>
        <dbReference type="ChEBI" id="CHEBI:29105"/>
    </cofactor>
    <text evidence="1">Binds 1 zinc ion per subunit.</text>
</comment>
<comment type="pathway">
    <text evidence="1">Carbohydrate metabolism; D-tagatose 6-phosphate degradation; D-glyceraldehyde 3-phosphate and glycerone phosphate from D-tagatose 6-phosphate: step 2/2.</text>
</comment>
<comment type="subunit">
    <text evidence="1">Forms a complex with GatZ.</text>
</comment>
<comment type="similarity">
    <text evidence="1">Belongs to the class II fructose-bisphosphate aldolase family. TagBP aldolase GatY subfamily.</text>
</comment>
<comment type="sequence caution" evidence="2">
    <conflict type="erroneous initiation">
        <sequence resource="EMBL-CDS" id="ABB62346"/>
    </conflict>
</comment>
<dbReference type="EC" id="4.1.2.40" evidence="1"/>
<dbReference type="EMBL" id="CP000034">
    <property type="protein sequence ID" value="ABB62346.1"/>
    <property type="status" value="ALT_INIT"/>
    <property type="molecule type" value="Genomic_DNA"/>
</dbReference>
<dbReference type="RefSeq" id="WP_005021752.1">
    <property type="nucleotide sequence ID" value="NC_007606.1"/>
</dbReference>
<dbReference type="RefSeq" id="YP_403837.2">
    <property type="nucleotide sequence ID" value="NC_007606.1"/>
</dbReference>
<dbReference type="SMR" id="Q32EA9"/>
<dbReference type="STRING" id="300267.SDY_2269"/>
<dbReference type="EnsemblBacteria" id="ABB62346">
    <property type="protein sequence ID" value="ABB62346"/>
    <property type="gene ID" value="SDY_2269"/>
</dbReference>
<dbReference type="KEGG" id="sdy:SDY_2269"/>
<dbReference type="PATRIC" id="fig|300267.13.peg.2742"/>
<dbReference type="HOGENOM" id="CLU_040088_0_1_6"/>
<dbReference type="UniPathway" id="UPA00704">
    <property type="reaction ID" value="UER00716"/>
</dbReference>
<dbReference type="Proteomes" id="UP000002716">
    <property type="component" value="Chromosome"/>
</dbReference>
<dbReference type="GO" id="GO:0005829">
    <property type="term" value="C:cytosol"/>
    <property type="evidence" value="ECO:0007669"/>
    <property type="project" value="TreeGrafter"/>
</dbReference>
<dbReference type="GO" id="GO:0009025">
    <property type="term" value="F:tagatose-bisphosphate aldolase activity"/>
    <property type="evidence" value="ECO:0007669"/>
    <property type="project" value="UniProtKB-UniRule"/>
</dbReference>
<dbReference type="GO" id="GO:0008270">
    <property type="term" value="F:zinc ion binding"/>
    <property type="evidence" value="ECO:0007669"/>
    <property type="project" value="UniProtKB-UniRule"/>
</dbReference>
<dbReference type="GO" id="GO:2001059">
    <property type="term" value="P:D-tagatose 6-phosphate catabolic process"/>
    <property type="evidence" value="ECO:0007669"/>
    <property type="project" value="UniProtKB-UniRule"/>
</dbReference>
<dbReference type="GO" id="GO:0019404">
    <property type="term" value="P:galactitol catabolic process"/>
    <property type="evidence" value="ECO:0007669"/>
    <property type="project" value="InterPro"/>
</dbReference>
<dbReference type="CDD" id="cd00947">
    <property type="entry name" value="TBP_aldolase_IIB"/>
    <property type="match status" value="1"/>
</dbReference>
<dbReference type="FunFam" id="3.20.20.70:FF:000043">
    <property type="entry name" value="D-tagatose-1,6-bisphosphate aldolase subunit GatY"/>
    <property type="match status" value="1"/>
</dbReference>
<dbReference type="Gene3D" id="3.20.20.70">
    <property type="entry name" value="Aldolase class I"/>
    <property type="match status" value="1"/>
</dbReference>
<dbReference type="HAMAP" id="MF_01294">
    <property type="entry name" value="TagBP_aldolase_GatY"/>
    <property type="match status" value="1"/>
</dbReference>
<dbReference type="InterPro" id="IPR013785">
    <property type="entry name" value="Aldolase_TIM"/>
</dbReference>
<dbReference type="InterPro" id="IPR050246">
    <property type="entry name" value="Class_II_FBP_aldolase"/>
</dbReference>
<dbReference type="InterPro" id="IPR000771">
    <property type="entry name" value="FBA_II"/>
</dbReference>
<dbReference type="InterPro" id="IPR011288">
    <property type="entry name" value="TagBP_ald_KbaY/GatY"/>
</dbReference>
<dbReference type="InterPro" id="IPR023955">
    <property type="entry name" value="TagBP_aldolase_GatY"/>
</dbReference>
<dbReference type="NCBIfam" id="TIGR00167">
    <property type="entry name" value="cbbA"/>
    <property type="match status" value="1"/>
</dbReference>
<dbReference type="NCBIfam" id="NF006626">
    <property type="entry name" value="PRK09195.1"/>
    <property type="match status" value="1"/>
</dbReference>
<dbReference type="NCBIfam" id="NF009374">
    <property type="entry name" value="PRK12737.1"/>
    <property type="match status" value="1"/>
</dbReference>
<dbReference type="NCBIfam" id="TIGR01858">
    <property type="entry name" value="tag_bisphos_ald"/>
    <property type="match status" value="1"/>
</dbReference>
<dbReference type="PANTHER" id="PTHR30304">
    <property type="entry name" value="D-TAGATOSE-1,6-BISPHOSPHATE ALDOLASE"/>
    <property type="match status" value="1"/>
</dbReference>
<dbReference type="PANTHER" id="PTHR30304:SF0">
    <property type="entry name" value="D-TAGATOSE-1,6-BISPHOSPHATE ALDOLASE SUBUNIT GATY-RELATED"/>
    <property type="match status" value="1"/>
</dbReference>
<dbReference type="Pfam" id="PF01116">
    <property type="entry name" value="F_bP_aldolase"/>
    <property type="match status" value="1"/>
</dbReference>
<dbReference type="PIRSF" id="PIRSF001359">
    <property type="entry name" value="F_bP_aldolase_II"/>
    <property type="match status" value="1"/>
</dbReference>
<dbReference type="SUPFAM" id="SSF51569">
    <property type="entry name" value="Aldolase"/>
    <property type="match status" value="1"/>
</dbReference>
<dbReference type="PROSITE" id="PS00806">
    <property type="entry name" value="ALDOLASE_CLASS_II_2"/>
    <property type="match status" value="1"/>
</dbReference>